<proteinExistence type="inferred from homology"/>
<reference key="1">
    <citation type="submission" date="2007-03" db="EMBL/GenBank/DDBJ databases">
        <title>Complete sequence of Shewanella loihica PV-4.</title>
        <authorList>
            <consortium name="US DOE Joint Genome Institute"/>
            <person name="Copeland A."/>
            <person name="Lucas S."/>
            <person name="Lapidus A."/>
            <person name="Barry K."/>
            <person name="Detter J.C."/>
            <person name="Glavina del Rio T."/>
            <person name="Hammon N."/>
            <person name="Israni S."/>
            <person name="Dalin E."/>
            <person name="Tice H."/>
            <person name="Pitluck S."/>
            <person name="Chain P."/>
            <person name="Malfatti S."/>
            <person name="Shin M."/>
            <person name="Vergez L."/>
            <person name="Schmutz J."/>
            <person name="Larimer F."/>
            <person name="Land M."/>
            <person name="Hauser L."/>
            <person name="Kyrpides N."/>
            <person name="Mikhailova N."/>
            <person name="Romine M.F."/>
            <person name="Serres G."/>
            <person name="Fredrickson J."/>
            <person name="Tiedje J."/>
            <person name="Richardson P."/>
        </authorList>
    </citation>
    <scope>NUCLEOTIDE SEQUENCE [LARGE SCALE GENOMIC DNA]</scope>
    <source>
        <strain>ATCC BAA-1088 / PV-4</strain>
    </source>
</reference>
<dbReference type="EC" id="2.7.1.170" evidence="1"/>
<dbReference type="EMBL" id="CP000606">
    <property type="protein sequence ID" value="ABO22891.1"/>
    <property type="molecule type" value="Genomic_DNA"/>
</dbReference>
<dbReference type="RefSeq" id="WP_011864824.1">
    <property type="nucleotide sequence ID" value="NC_009092.1"/>
</dbReference>
<dbReference type="SMR" id="A3QBP3"/>
<dbReference type="STRING" id="323850.Shew_1020"/>
<dbReference type="KEGG" id="slo:Shew_1020"/>
<dbReference type="eggNOG" id="COG2377">
    <property type="taxonomic scope" value="Bacteria"/>
</dbReference>
<dbReference type="HOGENOM" id="CLU_038782_0_0_6"/>
<dbReference type="OrthoDB" id="9763949at2"/>
<dbReference type="UniPathway" id="UPA00343"/>
<dbReference type="UniPathway" id="UPA00544"/>
<dbReference type="Proteomes" id="UP000001558">
    <property type="component" value="Chromosome"/>
</dbReference>
<dbReference type="GO" id="GO:0005524">
    <property type="term" value="F:ATP binding"/>
    <property type="evidence" value="ECO:0007669"/>
    <property type="project" value="UniProtKB-UniRule"/>
</dbReference>
<dbReference type="GO" id="GO:0016301">
    <property type="term" value="F:kinase activity"/>
    <property type="evidence" value="ECO:0007669"/>
    <property type="project" value="UniProtKB-KW"/>
</dbReference>
<dbReference type="GO" id="GO:0016773">
    <property type="term" value="F:phosphotransferase activity, alcohol group as acceptor"/>
    <property type="evidence" value="ECO:0007669"/>
    <property type="project" value="UniProtKB-UniRule"/>
</dbReference>
<dbReference type="GO" id="GO:0097175">
    <property type="term" value="P:1,6-anhydro-N-acetyl-beta-muramic acid catabolic process"/>
    <property type="evidence" value="ECO:0007669"/>
    <property type="project" value="UniProtKB-UniRule"/>
</dbReference>
<dbReference type="GO" id="GO:0006040">
    <property type="term" value="P:amino sugar metabolic process"/>
    <property type="evidence" value="ECO:0007669"/>
    <property type="project" value="InterPro"/>
</dbReference>
<dbReference type="GO" id="GO:0009254">
    <property type="term" value="P:peptidoglycan turnover"/>
    <property type="evidence" value="ECO:0007669"/>
    <property type="project" value="UniProtKB-UniRule"/>
</dbReference>
<dbReference type="CDD" id="cd24050">
    <property type="entry name" value="ASKHA_NBD_ANMK"/>
    <property type="match status" value="1"/>
</dbReference>
<dbReference type="Gene3D" id="3.30.420.40">
    <property type="match status" value="2"/>
</dbReference>
<dbReference type="HAMAP" id="MF_01270">
    <property type="entry name" value="AnhMurNAc_kinase"/>
    <property type="match status" value="1"/>
</dbReference>
<dbReference type="InterPro" id="IPR005338">
    <property type="entry name" value="Anhydro_N_Ac-Mur_kinase"/>
</dbReference>
<dbReference type="InterPro" id="IPR043129">
    <property type="entry name" value="ATPase_NBD"/>
</dbReference>
<dbReference type="NCBIfam" id="NF007139">
    <property type="entry name" value="PRK09585.1-3"/>
    <property type="match status" value="1"/>
</dbReference>
<dbReference type="NCBIfam" id="NF007148">
    <property type="entry name" value="PRK09585.3-2"/>
    <property type="match status" value="1"/>
</dbReference>
<dbReference type="PANTHER" id="PTHR30605">
    <property type="entry name" value="ANHYDRO-N-ACETYLMURAMIC ACID KINASE"/>
    <property type="match status" value="1"/>
</dbReference>
<dbReference type="PANTHER" id="PTHR30605:SF0">
    <property type="entry name" value="ANHYDRO-N-ACETYLMURAMIC ACID KINASE"/>
    <property type="match status" value="1"/>
</dbReference>
<dbReference type="Pfam" id="PF03702">
    <property type="entry name" value="AnmK"/>
    <property type="match status" value="1"/>
</dbReference>
<dbReference type="SUPFAM" id="SSF53067">
    <property type="entry name" value="Actin-like ATPase domain"/>
    <property type="match status" value="1"/>
</dbReference>
<evidence type="ECO:0000255" key="1">
    <source>
        <dbReference type="HAMAP-Rule" id="MF_01270"/>
    </source>
</evidence>
<protein>
    <recommendedName>
        <fullName evidence="1">Anhydro-N-acetylmuramic acid kinase</fullName>
        <ecNumber evidence="1">2.7.1.170</ecNumber>
    </recommendedName>
    <alternativeName>
        <fullName evidence="1">AnhMurNAc kinase</fullName>
    </alternativeName>
</protein>
<keyword id="KW-0067">ATP-binding</keyword>
<keyword id="KW-0119">Carbohydrate metabolism</keyword>
<keyword id="KW-0418">Kinase</keyword>
<keyword id="KW-0547">Nucleotide-binding</keyword>
<keyword id="KW-1185">Reference proteome</keyword>
<keyword id="KW-0808">Transferase</keyword>
<accession>A3QBP3</accession>
<comment type="function">
    <text evidence="1">Catalyzes the specific phosphorylation of 1,6-anhydro-N-acetylmuramic acid (anhMurNAc) with the simultaneous cleavage of the 1,6-anhydro ring, generating MurNAc-6-P. Is required for the utilization of anhMurNAc either imported from the medium or derived from its own cell wall murein, and thus plays a role in cell wall recycling.</text>
</comment>
<comment type="catalytic activity">
    <reaction evidence="1">
        <text>1,6-anhydro-N-acetyl-beta-muramate + ATP + H2O = N-acetyl-D-muramate 6-phosphate + ADP + H(+)</text>
        <dbReference type="Rhea" id="RHEA:24952"/>
        <dbReference type="ChEBI" id="CHEBI:15377"/>
        <dbReference type="ChEBI" id="CHEBI:15378"/>
        <dbReference type="ChEBI" id="CHEBI:30616"/>
        <dbReference type="ChEBI" id="CHEBI:58690"/>
        <dbReference type="ChEBI" id="CHEBI:58722"/>
        <dbReference type="ChEBI" id="CHEBI:456216"/>
        <dbReference type="EC" id="2.7.1.170"/>
    </reaction>
</comment>
<comment type="pathway">
    <text evidence="1">Amino-sugar metabolism; 1,6-anhydro-N-acetylmuramate degradation.</text>
</comment>
<comment type="pathway">
    <text evidence="1">Cell wall biogenesis; peptidoglycan recycling.</text>
</comment>
<comment type="similarity">
    <text evidence="1">Belongs to the anhydro-N-acetylmuramic acid kinase family.</text>
</comment>
<sequence>MSKHYYIGLMSGTSMDGVDAVLVDFSDDKITLVDTHTEPLPSHLLSGLQRLCQSGSDEINRMGILDRSVGKLFAQAVEGLLTKSGVDRHQIMAIGSHGQTVRHMPNLELGFTLQIGDPNTIAALTGIDVIADFRRKDIALGGQGAPLVPAFHQQLFARTGHQRMILNIGGISNITYLPGDASAVIGFDNGPGNTLIDTWIKQVQGEAYDKDGAWAASGKTDEQLLKQMLSHSYFSLSAPKSTGRELFNQAWLEQQTSDFGYLHESDIQSTLLDLTCHSIANDCLKLTEKAELYVCGGGAFNTELLTRLAALLPGYQVHTTASLGVDPQWVEGIAFAWLAMRHKLGLPGNLPAVTGASRETVLGGLFPGN</sequence>
<feature type="chain" id="PRO_1000067363" description="Anhydro-N-acetylmuramic acid kinase">
    <location>
        <begin position="1"/>
        <end position="369"/>
    </location>
</feature>
<feature type="binding site" evidence="1">
    <location>
        <begin position="12"/>
        <end position="19"/>
    </location>
    <ligand>
        <name>ATP</name>
        <dbReference type="ChEBI" id="CHEBI:30616"/>
    </ligand>
</feature>
<name>ANMK_SHELP</name>
<organism>
    <name type="scientific">Shewanella loihica (strain ATCC BAA-1088 / PV-4)</name>
    <dbReference type="NCBI Taxonomy" id="323850"/>
    <lineage>
        <taxon>Bacteria</taxon>
        <taxon>Pseudomonadati</taxon>
        <taxon>Pseudomonadota</taxon>
        <taxon>Gammaproteobacteria</taxon>
        <taxon>Alteromonadales</taxon>
        <taxon>Shewanellaceae</taxon>
        <taxon>Shewanella</taxon>
    </lineage>
</organism>
<gene>
    <name evidence="1" type="primary">anmK</name>
    <name type="ordered locus">Shew_1020</name>
</gene>